<keyword id="KW-0687">Ribonucleoprotein</keyword>
<keyword id="KW-0689">Ribosomal protein</keyword>
<keyword id="KW-0694">RNA-binding</keyword>
<keyword id="KW-0699">rRNA-binding</keyword>
<proteinExistence type="inferred from homology"/>
<accession>B0T2D8</accession>
<sequence>MALSPRESAVRRAQRTRTRLKALSNGRPRLSVFRSSKNIYAQVIDDERGVTLASASTLEGEAATKGADKDAAALVGKLVAERAIEKGVKDVVFDRGGYIFHGRVKALADAAREAGLNF</sequence>
<feature type="chain" id="PRO_1000086655" description="Large ribosomal subunit protein uL18">
    <location>
        <begin position="1"/>
        <end position="118"/>
    </location>
</feature>
<dbReference type="EMBL" id="CP000927">
    <property type="protein sequence ID" value="ABZ70759.1"/>
    <property type="molecule type" value="Genomic_DNA"/>
</dbReference>
<dbReference type="SMR" id="B0T2D8"/>
<dbReference type="STRING" id="366602.Caul_1630"/>
<dbReference type="KEGG" id="cak:Caul_1630"/>
<dbReference type="eggNOG" id="COG0256">
    <property type="taxonomic scope" value="Bacteria"/>
</dbReference>
<dbReference type="HOGENOM" id="CLU_098841_0_1_5"/>
<dbReference type="OrthoDB" id="9810939at2"/>
<dbReference type="GO" id="GO:0022625">
    <property type="term" value="C:cytosolic large ribosomal subunit"/>
    <property type="evidence" value="ECO:0007669"/>
    <property type="project" value="TreeGrafter"/>
</dbReference>
<dbReference type="GO" id="GO:0008097">
    <property type="term" value="F:5S rRNA binding"/>
    <property type="evidence" value="ECO:0007669"/>
    <property type="project" value="TreeGrafter"/>
</dbReference>
<dbReference type="GO" id="GO:0003735">
    <property type="term" value="F:structural constituent of ribosome"/>
    <property type="evidence" value="ECO:0007669"/>
    <property type="project" value="InterPro"/>
</dbReference>
<dbReference type="GO" id="GO:0006412">
    <property type="term" value="P:translation"/>
    <property type="evidence" value="ECO:0007669"/>
    <property type="project" value="UniProtKB-UniRule"/>
</dbReference>
<dbReference type="CDD" id="cd00432">
    <property type="entry name" value="Ribosomal_L18_L5e"/>
    <property type="match status" value="1"/>
</dbReference>
<dbReference type="FunFam" id="3.30.420.100:FF:000001">
    <property type="entry name" value="50S ribosomal protein L18"/>
    <property type="match status" value="1"/>
</dbReference>
<dbReference type="Gene3D" id="3.30.420.100">
    <property type="match status" value="1"/>
</dbReference>
<dbReference type="HAMAP" id="MF_01337_B">
    <property type="entry name" value="Ribosomal_uL18_B"/>
    <property type="match status" value="1"/>
</dbReference>
<dbReference type="InterPro" id="IPR004389">
    <property type="entry name" value="Ribosomal_uL18_bac-type"/>
</dbReference>
<dbReference type="InterPro" id="IPR005484">
    <property type="entry name" value="Ribosomal_uL18_bac/euk"/>
</dbReference>
<dbReference type="NCBIfam" id="TIGR00060">
    <property type="entry name" value="L18_bact"/>
    <property type="match status" value="1"/>
</dbReference>
<dbReference type="PANTHER" id="PTHR12899">
    <property type="entry name" value="39S RIBOSOMAL PROTEIN L18, MITOCHONDRIAL"/>
    <property type="match status" value="1"/>
</dbReference>
<dbReference type="PANTHER" id="PTHR12899:SF3">
    <property type="entry name" value="LARGE RIBOSOMAL SUBUNIT PROTEIN UL18M"/>
    <property type="match status" value="1"/>
</dbReference>
<dbReference type="Pfam" id="PF00861">
    <property type="entry name" value="Ribosomal_L18p"/>
    <property type="match status" value="1"/>
</dbReference>
<dbReference type="SUPFAM" id="SSF53137">
    <property type="entry name" value="Translational machinery components"/>
    <property type="match status" value="1"/>
</dbReference>
<reference key="1">
    <citation type="submission" date="2008-01" db="EMBL/GenBank/DDBJ databases">
        <title>Complete sequence of chromosome of Caulobacter sp. K31.</title>
        <authorList>
            <consortium name="US DOE Joint Genome Institute"/>
            <person name="Copeland A."/>
            <person name="Lucas S."/>
            <person name="Lapidus A."/>
            <person name="Barry K."/>
            <person name="Glavina del Rio T."/>
            <person name="Dalin E."/>
            <person name="Tice H."/>
            <person name="Pitluck S."/>
            <person name="Bruce D."/>
            <person name="Goodwin L."/>
            <person name="Thompson L.S."/>
            <person name="Brettin T."/>
            <person name="Detter J.C."/>
            <person name="Han C."/>
            <person name="Schmutz J."/>
            <person name="Larimer F."/>
            <person name="Land M."/>
            <person name="Hauser L."/>
            <person name="Kyrpides N."/>
            <person name="Kim E."/>
            <person name="Stephens C."/>
            <person name="Richardson P."/>
        </authorList>
    </citation>
    <scope>NUCLEOTIDE SEQUENCE [LARGE SCALE GENOMIC DNA]</scope>
    <source>
        <strain>K31</strain>
    </source>
</reference>
<evidence type="ECO:0000255" key="1">
    <source>
        <dbReference type="HAMAP-Rule" id="MF_01337"/>
    </source>
</evidence>
<evidence type="ECO:0000305" key="2"/>
<name>RL18_CAUSK</name>
<protein>
    <recommendedName>
        <fullName evidence="1">Large ribosomal subunit protein uL18</fullName>
    </recommendedName>
    <alternativeName>
        <fullName evidence="2">50S ribosomal protein L18</fullName>
    </alternativeName>
</protein>
<gene>
    <name evidence="1" type="primary">rplR</name>
    <name type="ordered locus">Caul_1630</name>
</gene>
<comment type="function">
    <text evidence="1">This is one of the proteins that bind and probably mediate the attachment of the 5S RNA into the large ribosomal subunit, where it forms part of the central protuberance.</text>
</comment>
<comment type="subunit">
    <text evidence="1">Part of the 50S ribosomal subunit; part of the 5S rRNA/L5/L18/L25 subcomplex. Contacts the 5S and 23S rRNAs.</text>
</comment>
<comment type="similarity">
    <text evidence="1">Belongs to the universal ribosomal protein uL18 family.</text>
</comment>
<organism>
    <name type="scientific">Caulobacter sp. (strain K31)</name>
    <dbReference type="NCBI Taxonomy" id="366602"/>
    <lineage>
        <taxon>Bacteria</taxon>
        <taxon>Pseudomonadati</taxon>
        <taxon>Pseudomonadota</taxon>
        <taxon>Alphaproteobacteria</taxon>
        <taxon>Caulobacterales</taxon>
        <taxon>Caulobacteraceae</taxon>
        <taxon>Caulobacter</taxon>
    </lineage>
</organism>